<sequence length="522" mass="59138">MAFLDNPTIILAHIRQSHVTSDDTGMCEMVLIDHDVDLEKIHPPSMPGDSGSEIQGSNGETQGYVYAQSVDITSSWDFGIRRRSNTAQRLERLRKERQNQIKCKNIQWKERNSKQSAQELKSLFEKKSLKEKPPISGKQSILSVRLEQCPLQLNNPFNEYSKFDGKGHVGTTATKKIDVYLPLHSSQDRLLPMTVVTMASARVQDLIGLICWQYTSEGREPKLNDNVSAYCLHIAEDDGEVDTDFPPLDSNEPIHKFGFSTLALVEKYSSPGLTSKESLFVRINAAHGFSLIQVDNTKVTMKEILLKAVKRRKGSQKVSGPQYRLEKQSEPNVAVDLDSTLESQSAWEFCQVRENSSRADGVFEEDSQIDIATVQDMLSSHHYKSFKVSMIHRLRFTTDVQLGISGDKVEIDPVTNQKASTKFWIKQKPISIDSDLLCACDLAEEKSPSHAIFKLTYLSNHDYKHLYFESDAATVNEIVLKVNYILESRASTARADYFAQKQRKLNRRTSFSFQKEKKSGQQ</sequence>
<gene>
    <name type="primary">MAPKAP1</name>
    <name type="synonym">SIN1</name>
</gene>
<dbReference type="EMBL" id="CR857789">
    <property type="protein sequence ID" value="CAH90052.1"/>
    <property type="molecule type" value="mRNA"/>
</dbReference>
<dbReference type="RefSeq" id="NP_001124982.1">
    <property type="nucleotide sequence ID" value="NM_001131510.1"/>
</dbReference>
<dbReference type="SMR" id="Q5RDV5"/>
<dbReference type="STRING" id="9601.ENSPPYP00000021975"/>
<dbReference type="GeneID" id="100171855"/>
<dbReference type="KEGG" id="pon:100171855"/>
<dbReference type="CTD" id="79109"/>
<dbReference type="eggNOG" id="KOG3739">
    <property type="taxonomic scope" value="Eukaryota"/>
</dbReference>
<dbReference type="InParanoid" id="Q5RDV5"/>
<dbReference type="OrthoDB" id="241990at2759"/>
<dbReference type="Proteomes" id="UP000001595">
    <property type="component" value="Unplaced"/>
</dbReference>
<dbReference type="GO" id="GO:0005769">
    <property type="term" value="C:early endosome"/>
    <property type="evidence" value="ECO:0000250"/>
    <property type="project" value="UniProtKB"/>
</dbReference>
<dbReference type="GO" id="GO:0031901">
    <property type="term" value="C:early endosome membrane"/>
    <property type="evidence" value="ECO:0007669"/>
    <property type="project" value="UniProtKB-SubCell"/>
</dbReference>
<dbReference type="GO" id="GO:0005783">
    <property type="term" value="C:endoplasmic reticulum"/>
    <property type="evidence" value="ECO:0000250"/>
    <property type="project" value="UniProtKB"/>
</dbReference>
<dbReference type="GO" id="GO:0005789">
    <property type="term" value="C:endoplasmic reticulum membrane"/>
    <property type="evidence" value="ECO:0007669"/>
    <property type="project" value="UniProtKB-SubCell"/>
</dbReference>
<dbReference type="GO" id="GO:0000139">
    <property type="term" value="C:Golgi membrane"/>
    <property type="evidence" value="ECO:0007669"/>
    <property type="project" value="UniProtKB-SubCell"/>
</dbReference>
<dbReference type="GO" id="GO:0005770">
    <property type="term" value="C:late endosome"/>
    <property type="evidence" value="ECO:0000250"/>
    <property type="project" value="UniProtKB"/>
</dbReference>
<dbReference type="GO" id="GO:0031902">
    <property type="term" value="C:late endosome membrane"/>
    <property type="evidence" value="ECO:0007669"/>
    <property type="project" value="UniProtKB-SubCell"/>
</dbReference>
<dbReference type="GO" id="GO:0005765">
    <property type="term" value="C:lysosomal membrane"/>
    <property type="evidence" value="ECO:0007669"/>
    <property type="project" value="UniProtKB-SubCell"/>
</dbReference>
<dbReference type="GO" id="GO:0005764">
    <property type="term" value="C:lysosome"/>
    <property type="evidence" value="ECO:0000250"/>
    <property type="project" value="UniProtKB"/>
</dbReference>
<dbReference type="GO" id="GO:0005741">
    <property type="term" value="C:mitochondrial outer membrane"/>
    <property type="evidence" value="ECO:0000250"/>
    <property type="project" value="UniProtKB"/>
</dbReference>
<dbReference type="GO" id="GO:0005634">
    <property type="term" value="C:nucleus"/>
    <property type="evidence" value="ECO:0007669"/>
    <property type="project" value="UniProtKB-SubCell"/>
</dbReference>
<dbReference type="GO" id="GO:0048471">
    <property type="term" value="C:perinuclear region of cytoplasm"/>
    <property type="evidence" value="ECO:0007669"/>
    <property type="project" value="UniProtKB-SubCell"/>
</dbReference>
<dbReference type="GO" id="GO:0005886">
    <property type="term" value="C:plasma membrane"/>
    <property type="evidence" value="ECO:0007669"/>
    <property type="project" value="UniProtKB-SubCell"/>
</dbReference>
<dbReference type="GO" id="GO:0031932">
    <property type="term" value="C:TORC2 complex"/>
    <property type="evidence" value="ECO:0000250"/>
    <property type="project" value="UniProtKB"/>
</dbReference>
<dbReference type="GO" id="GO:0140767">
    <property type="term" value="F:enzyme-substrate adaptor activity"/>
    <property type="evidence" value="ECO:0000250"/>
    <property type="project" value="UniProtKB"/>
</dbReference>
<dbReference type="GO" id="GO:0005547">
    <property type="term" value="F:phosphatidylinositol-3,4,5-trisphosphate binding"/>
    <property type="evidence" value="ECO:0000250"/>
    <property type="project" value="UniProtKB"/>
</dbReference>
<dbReference type="GO" id="GO:0005546">
    <property type="term" value="F:phosphatidylinositol-4,5-bisphosphate binding"/>
    <property type="evidence" value="ECO:0007669"/>
    <property type="project" value="TreeGrafter"/>
</dbReference>
<dbReference type="GO" id="GO:0032869">
    <property type="term" value="P:cellular response to insulin stimulus"/>
    <property type="evidence" value="ECO:0000250"/>
    <property type="project" value="UniProtKB"/>
</dbReference>
<dbReference type="GO" id="GO:0038203">
    <property type="term" value="P:TORC2 signaling"/>
    <property type="evidence" value="ECO:0000250"/>
    <property type="project" value="UniProtKB"/>
</dbReference>
<dbReference type="CDD" id="cd13331">
    <property type="entry name" value="PH_Avo1"/>
    <property type="match status" value="1"/>
</dbReference>
<dbReference type="FunFam" id="2.30.29.30:FF:000585">
    <property type="entry name" value="target of rapamycin complex 2 subunit MAPKAP1 isoform X3"/>
    <property type="match status" value="1"/>
</dbReference>
<dbReference type="Gene3D" id="2.30.29.30">
    <property type="entry name" value="Pleckstrin-homology domain (PH domain)/Phosphotyrosine-binding domain (PTB)"/>
    <property type="match status" value="1"/>
</dbReference>
<dbReference type="InterPro" id="IPR031567">
    <property type="entry name" value="CRIM_dom"/>
</dbReference>
<dbReference type="InterPro" id="IPR011993">
    <property type="entry name" value="PH-like_dom_sf"/>
</dbReference>
<dbReference type="InterPro" id="IPR008828">
    <property type="entry name" value="Sin1/Avo1"/>
</dbReference>
<dbReference type="InterPro" id="IPR032679">
    <property type="entry name" value="Sin1_N"/>
</dbReference>
<dbReference type="InterPro" id="IPR031313">
    <property type="entry name" value="Sin1_PH_dom"/>
</dbReference>
<dbReference type="PANTHER" id="PTHR13335">
    <property type="entry name" value="TARGET OF RAPAMYCIN COMPLEX 2 SUBUNIT MAPKAP1"/>
    <property type="match status" value="1"/>
</dbReference>
<dbReference type="PANTHER" id="PTHR13335:SF1">
    <property type="entry name" value="TARGET OF RAPAMYCIN COMPLEX 2 SUBUNIT MAPKAP1"/>
    <property type="match status" value="1"/>
</dbReference>
<dbReference type="Pfam" id="PF16978">
    <property type="entry name" value="CRIM"/>
    <property type="match status" value="1"/>
</dbReference>
<dbReference type="Pfam" id="PF05422">
    <property type="entry name" value="SIN1"/>
    <property type="match status" value="1"/>
</dbReference>
<dbReference type="Pfam" id="PF16979">
    <property type="entry name" value="SIN1_PH"/>
    <property type="match status" value="1"/>
</dbReference>
<feature type="initiator methionine" description="Removed" evidence="3">
    <location>
        <position position="1"/>
    </location>
</feature>
<feature type="chain" id="PRO_0000328035" description="Target of rapamycin complex 2 subunit MAPKAP1">
    <location>
        <begin position="2"/>
        <end position="522"/>
    </location>
</feature>
<feature type="domain" description="CRIM" evidence="4">
    <location>
        <begin position="139"/>
        <end position="267"/>
    </location>
</feature>
<feature type="domain" description="SIN1-type PH" evidence="4">
    <location>
        <begin position="382"/>
        <end position="487"/>
    </location>
</feature>
<feature type="region of interest" description="Interaction with NBN" evidence="3">
    <location>
        <begin position="2"/>
        <end position="267"/>
    </location>
</feature>
<feature type="region of interest" description="Interaction with MAP3K2" evidence="3">
    <location>
        <begin position="2"/>
        <end position="184"/>
    </location>
</feature>
<feature type="region of interest" description="SIN1-type RBD" evidence="4">
    <location>
        <begin position="279"/>
        <end position="353"/>
    </location>
</feature>
<feature type="region of interest" description="Interaction with ATF2" evidence="3">
    <location>
        <begin position="468"/>
        <end position="522"/>
    </location>
</feature>
<feature type="binding site" evidence="3">
    <location>
        <position position="393"/>
    </location>
    <ligand>
        <name>a 1,2-diacyl-sn-glycero-3-phospho-(1D-myo-inositol-3,4,5-trisphosphate)</name>
        <dbReference type="ChEBI" id="CHEBI:57836"/>
    </ligand>
</feature>
<feature type="binding site" evidence="3">
    <location>
        <position position="428"/>
    </location>
    <ligand>
        <name>a 1,2-diacyl-sn-glycero-3-phospho-(1D-myo-inositol-3,4,5-trisphosphate)</name>
        <dbReference type="ChEBI" id="CHEBI:57836"/>
    </ligand>
</feature>
<feature type="binding site" evidence="3">
    <location>
        <position position="464"/>
    </location>
    <ligand>
        <name>a 1,2-diacyl-sn-glycero-3-phospho-(1D-myo-inositol-3,4,5-trisphosphate)</name>
        <dbReference type="ChEBI" id="CHEBI:57836"/>
    </ligand>
</feature>
<feature type="modified residue" description="N-acetylalanine" evidence="3">
    <location>
        <position position="2"/>
    </location>
</feature>
<feature type="modified residue" description="Phosphothreonine" evidence="3">
    <location>
        <position position="86"/>
    </location>
</feature>
<feature type="modified residue" description="Phosphoserine" evidence="3">
    <location>
        <position position="128"/>
    </location>
</feature>
<feature type="modified residue" description="Phosphoserine" evidence="3">
    <location>
        <position position="186"/>
    </location>
</feature>
<feature type="modified residue" description="Phosphoserine" evidence="3">
    <location>
        <position position="315"/>
    </location>
</feature>
<feature type="modified residue" description="Phosphoserine" evidence="3">
    <location>
        <position position="356"/>
    </location>
</feature>
<feature type="modified residue" description="Phosphothreonine" evidence="2">
    <location>
        <position position="398"/>
    </location>
</feature>
<feature type="modified residue" description="Phosphoserine" evidence="3">
    <location>
        <position position="510"/>
    </location>
</feature>
<proteinExistence type="evidence at transcript level"/>
<protein>
    <recommendedName>
        <fullName>Target of rapamycin complex 2 subunit MAPKAP1</fullName>
        <shortName>TORC2 subunit MAPKAP1</shortName>
    </recommendedName>
    <alternativeName>
        <fullName>Mitogen-activated protein kinase 2-associated protein 1</fullName>
    </alternativeName>
    <alternativeName>
        <fullName>Stress-activated map kinase-interacting protein 1</fullName>
        <shortName>SAPK-interacting protein 1</shortName>
    </alternativeName>
</protein>
<organism>
    <name type="scientific">Pongo abelii</name>
    <name type="common">Sumatran orangutan</name>
    <name type="synonym">Pongo pygmaeus abelii</name>
    <dbReference type="NCBI Taxonomy" id="9601"/>
    <lineage>
        <taxon>Eukaryota</taxon>
        <taxon>Metazoa</taxon>
        <taxon>Chordata</taxon>
        <taxon>Craniata</taxon>
        <taxon>Vertebrata</taxon>
        <taxon>Euteleostomi</taxon>
        <taxon>Mammalia</taxon>
        <taxon>Eutheria</taxon>
        <taxon>Euarchontoglires</taxon>
        <taxon>Primates</taxon>
        <taxon>Haplorrhini</taxon>
        <taxon>Catarrhini</taxon>
        <taxon>Hominidae</taxon>
        <taxon>Pongo</taxon>
    </lineage>
</organism>
<accession>Q5RDV5</accession>
<comment type="function">
    <text evidence="2 3">Component of the mechanistic target of rapamycin complex 2 (mTORC2), which transduces signals from growth factors to pathways involved in proliferation, cytoskeletal organization, lipogenesis and anabolic output (By similarity). In response to growth factors, mTORC2 phosphorylates and activates AGC protein kinase family members, including AKT (AKT1, AKT2 and AKT3), PKC (PRKCA, PRKCB and PRKCE) and SGK1 (By similarity). In contrast to mTORC1, mTORC2 is nutrient-insensitive (By similarity). Within the mTORC2 complex, MAPKAP1/SIN1 acts as a substrate adapter which recognizes and binds AGC protein kinase family members for phosphorylation by MTOR (By similarity). mTORC2 plays a critical role in AKT1 activation by mediating phosphorylation of different sites depending on the context, such as 'Thr-450', 'Ser-473', 'Ser-477' or 'Thr-479', facilitating the phosphorylation of the activation loop of AKT1 on 'Thr-308' by PDPK1/PDK1 which is a prerequisite for full activation (By similarity). mTORC2 catalyzes the phosphorylation of SGK1 at 'Ser-422' and of PRKCA on 'Ser-657' (By similarity). The mTORC2 complex also phosphorylates various proteins involved in insulin signaling, such as FBXW8 and IGF2BP1 (By similarity). mTORC2 acts upstream of Rho GTPases to regulate the actin cytoskeleton, probably by activating one or more Rho-type guanine nucleotide exchange factors (By similarity). mTORC2 promotes the serum-induced formation of stress-fibers or F-actin (By similarity). MAPKAP1 inhibits MAP3K2 by preventing its dimerization and autophosphorylation (By similarity). Inhibits HRAS and KRAS independently of mTORC2 complex (By similarity). Enhances osmotic stress-induced phosphorylation of ATF2 and ATF2-mediated transcription (By similarity). Involved in ciliogenesis, regulates cilia length through its interaction with CCDC28B independently of mTORC2 complex (By similarity).</text>
</comment>
<comment type="activity regulation">
    <text evidence="3">Phosphatidylinositol 3,4,5-trisphosphate (PI(3,4,5)P3) promotes MTOR activation by relieving MAPKAP1/SIN1-mediated inhibition of MTOR that takes place in absence of PI(3,4,5)P3.</text>
</comment>
<comment type="subunit">
    <text evidence="1 3">Component of the mechanistic target of rapamycin complex 2 (mTORC2), consisting in two heterotretramers composed of MTOR, MLST8, RICTOR and MAPKAP1/SIN1. The mTORC2 core complex associates with PRR5/PROTOR1 and/or PRR5L/PROTOR2. Contrary to mTORC1, mTORC2 does not bind to and is not sensitive to FKBP12-rapamycin. Interacts with MAP3K2. Interacts with ATF2. Interacts with MAPK8. Interacts with GTP-bound HRAS and KRAS; inhibiting their activity (By similarity). Interacts with IFNAR2 (By similarity).</text>
</comment>
<comment type="subcellular location">
    <subcellularLocation>
        <location evidence="3">Cell membrane</location>
        <topology evidence="3">Peripheral membrane protein</topology>
    </subcellularLocation>
    <subcellularLocation>
        <location evidence="3">Endoplasmic reticulum membrane</location>
        <topology evidence="3">Peripheral membrane protein</topology>
    </subcellularLocation>
    <subcellularLocation>
        <location evidence="3">Early endosome membrane</location>
        <topology evidence="3">Peripheral membrane protein</topology>
    </subcellularLocation>
    <subcellularLocation>
        <location evidence="3">Late endosome membrane</location>
        <topology evidence="3">Peripheral membrane protein</topology>
    </subcellularLocation>
    <subcellularLocation>
        <location evidence="3">Lysosome membrane</location>
        <topology evidence="3">Peripheral membrane protein</topology>
    </subcellularLocation>
    <subcellularLocation>
        <location evidence="3">Golgi apparatus membrane</location>
        <topology evidence="3">Peripheral membrane protein</topology>
    </subcellularLocation>
    <subcellularLocation>
        <location evidence="3">Mitochondrion outer membrane</location>
        <topology evidence="3">Peripheral membrane protein</topology>
    </subcellularLocation>
    <subcellularLocation>
        <location evidence="2">Cytoplasm</location>
        <location evidence="2">Perinuclear region</location>
    </subcellularLocation>
    <subcellularLocation>
        <location evidence="3">Nucleus</location>
    </subcellularLocation>
    <text evidence="2 3">The mTORC2 complex localizes to membranes: mTORC2 is active at the plasma membrane, endoplasmic reticulum membrane, lysosomes and perinuclear region. Iin lysosomal membrane, mTORC2 is sensitive to lysosomal positioning in the cell (By similarity). Following phosphorylation by PKC, localizes to the perinuclear region, where the mTORC2 complexe specifically phosphorylates SGK1, but not AKT (By similarity).</text>
</comment>
<comment type="domain">
    <text evidence="3">The CRIM domain forms a ubiquitin-like fold with a characteristic acidic loop, which recognizes and binds AGC protein kinase family members substrates.</text>
</comment>
<comment type="domain">
    <text evidence="3">The SIN1-type PH binds phosphatidylinositol 3,4,5-trisphosphate (PI(3,4,5)P3). It plays a dual role in mTORC2: in absence of PI(3,4,5)P3, it binds and inactivates MTOR. PI(3,4,5)P3-binding relieves the inhibition, leading to mTORC2 activation.</text>
</comment>
<comment type="PTM">
    <text evidence="2">Phosphorylation at Ser-128 by PKC promotes relocalization to the perinuclear region, where the mTORC2 complex specifically mediates phosphorylation of SGK1. Phosphorylated at Thr-86 by AKT1 or RPS6KB1 in the presence of growth factors; the effect of this phosphorylation is however unclear. According to two studies, phosphorylation at Thr-86 by AKT1 is part of a positive feedback loop that increases mTORC2 activation. According to another study, phosphorylation at Thr-86 and Thr-398 by RPS6KB1 promotes dissociation from the mTORC2 complex, leading to inhibit mTORC2 signaling.</text>
</comment>
<comment type="similarity">
    <text evidence="5">Belongs to the SIN1 family.</text>
</comment>
<evidence type="ECO:0000250" key="1">
    <source>
        <dbReference type="UniProtKB" id="Q6QD73"/>
    </source>
</evidence>
<evidence type="ECO:0000250" key="2">
    <source>
        <dbReference type="UniProtKB" id="Q8BKH7"/>
    </source>
</evidence>
<evidence type="ECO:0000250" key="3">
    <source>
        <dbReference type="UniProtKB" id="Q9BPZ7"/>
    </source>
</evidence>
<evidence type="ECO:0000255" key="4"/>
<evidence type="ECO:0000305" key="5"/>
<name>SIN1_PONAB</name>
<reference key="1">
    <citation type="submission" date="2004-11" db="EMBL/GenBank/DDBJ databases">
        <authorList>
            <consortium name="The German cDNA consortium"/>
        </authorList>
    </citation>
    <scope>NUCLEOTIDE SEQUENCE [LARGE SCALE MRNA]</scope>
    <source>
        <tissue>Brain cortex</tissue>
    </source>
</reference>
<keyword id="KW-0007">Acetylation</keyword>
<keyword id="KW-1003">Cell membrane</keyword>
<keyword id="KW-0963">Cytoplasm</keyword>
<keyword id="KW-0256">Endoplasmic reticulum</keyword>
<keyword id="KW-0967">Endosome</keyword>
<keyword id="KW-0333">Golgi apparatus</keyword>
<keyword id="KW-0458">Lysosome</keyword>
<keyword id="KW-0472">Membrane</keyword>
<keyword id="KW-0496">Mitochondrion</keyword>
<keyword id="KW-1000">Mitochondrion outer membrane</keyword>
<keyword id="KW-0539">Nucleus</keyword>
<keyword id="KW-0597">Phosphoprotein</keyword>
<keyword id="KW-1185">Reference proteome</keyword>
<keyword id="KW-0346">Stress response</keyword>